<protein>
    <recommendedName>
        <fullName evidence="2">Elongation factor Tu 1</fullName>
        <shortName evidence="2">EF-Tu 1</shortName>
        <ecNumber evidence="2">3.6.5.3</ecNumber>
    </recommendedName>
</protein>
<evidence type="ECO:0000250" key="1"/>
<evidence type="ECO:0000255" key="2">
    <source>
        <dbReference type="HAMAP-Rule" id="MF_00118"/>
    </source>
</evidence>
<sequence>MSKEKFERTKPHVNVGTIGHVDHGKTTLTAAITTVLAKTYGGAARAFDQIDNAPEEKARGITINTSHVEYDTPTRHYAHVDCPGHADYVKNMITGAAQMDGAILVVAATDGPMPQTREHILLGRQVGVPYIIVFLNKCDMVDDEELLELVEMEVRELLSQYDFPGDDTPIVRGSALKALEGDAEWEAKILELAGFLDSYIPEPERAIDKPFLLPIEDVFSISGRGTVVTGRVERGIIKVGEEVEIVGIKETQKSTCTGVEMFRKLLDEGRAGENVGVLLRGIKREEIERGQVLAKPGTIKPHTKFESEVYILSKDEGGRHTPFFKGYRPQFYFRTTDVTGTIELPEGVEMVMPGDNIKMVVTLIHPIAMDDGLRFAIREGGRTVGAGVVAKVLG</sequence>
<comment type="function">
    <text evidence="2">GTP hydrolase that promotes the GTP-dependent binding of aminoacyl-tRNA to the A-site of ribosomes during protein biosynthesis.</text>
</comment>
<comment type="catalytic activity">
    <reaction evidence="2">
        <text>GTP + H2O = GDP + phosphate + H(+)</text>
        <dbReference type="Rhea" id="RHEA:19669"/>
        <dbReference type="ChEBI" id="CHEBI:15377"/>
        <dbReference type="ChEBI" id="CHEBI:15378"/>
        <dbReference type="ChEBI" id="CHEBI:37565"/>
        <dbReference type="ChEBI" id="CHEBI:43474"/>
        <dbReference type="ChEBI" id="CHEBI:58189"/>
        <dbReference type="EC" id="3.6.5.3"/>
    </reaction>
    <physiologicalReaction direction="left-to-right" evidence="2">
        <dbReference type="Rhea" id="RHEA:19670"/>
    </physiologicalReaction>
</comment>
<comment type="subunit">
    <text evidence="2">Monomer.</text>
</comment>
<comment type="subcellular location">
    <subcellularLocation>
        <location evidence="2">Cytoplasm</location>
    </subcellularLocation>
</comment>
<comment type="similarity">
    <text evidence="2">Belongs to the TRAFAC class translation factor GTPase superfamily. Classic translation factor GTPase family. EF-Tu/EF-1A subfamily.</text>
</comment>
<proteinExistence type="evidence at protein level"/>
<reference key="1">
    <citation type="journal article" date="2006" name="Proc. Natl. Acad. Sci. U.S.A.">
        <title>Identification of genes subject to positive selection in uropathogenic strains of Escherichia coli: a comparative genomics approach.</title>
        <authorList>
            <person name="Chen S.L."/>
            <person name="Hung C.-S."/>
            <person name="Xu J."/>
            <person name="Reigstad C.S."/>
            <person name="Magrini V."/>
            <person name="Sabo A."/>
            <person name="Blasiar D."/>
            <person name="Bieri T."/>
            <person name="Meyer R.R."/>
            <person name="Ozersky P."/>
            <person name="Armstrong J.R."/>
            <person name="Fulton R.S."/>
            <person name="Latreille J.P."/>
            <person name="Spieth J."/>
            <person name="Hooton T.M."/>
            <person name="Mardis E.R."/>
            <person name="Hultgren S.J."/>
            <person name="Gordon J.I."/>
        </authorList>
    </citation>
    <scope>NUCLEOTIDE SEQUENCE [LARGE SCALE GENOMIC DNA]</scope>
    <source>
        <strain>UTI89 / UPEC</strain>
    </source>
</reference>
<accession>Q1R5Y2</accession>
<feature type="chain" id="PRO_0000337384" description="Elongation factor Tu 1">
    <location>
        <begin position="1"/>
        <end position="394"/>
    </location>
</feature>
<feature type="domain" description="tr-type G">
    <location>
        <begin position="10"/>
        <end position="204"/>
    </location>
</feature>
<feature type="region of interest" description="G1" evidence="1">
    <location>
        <begin position="19"/>
        <end position="26"/>
    </location>
</feature>
<feature type="region of interest" description="G2" evidence="1">
    <location>
        <begin position="60"/>
        <end position="64"/>
    </location>
</feature>
<feature type="region of interest" description="G3" evidence="1">
    <location>
        <begin position="81"/>
        <end position="84"/>
    </location>
</feature>
<feature type="region of interest" description="G4" evidence="1">
    <location>
        <begin position="136"/>
        <end position="139"/>
    </location>
</feature>
<feature type="region of interest" description="G5" evidence="1">
    <location>
        <begin position="174"/>
        <end position="176"/>
    </location>
</feature>
<feature type="binding site" evidence="2">
    <location>
        <begin position="19"/>
        <end position="26"/>
    </location>
    <ligand>
        <name>GTP</name>
        <dbReference type="ChEBI" id="CHEBI:37565"/>
    </ligand>
</feature>
<feature type="binding site" evidence="2">
    <location>
        <position position="26"/>
    </location>
    <ligand>
        <name>Mg(2+)</name>
        <dbReference type="ChEBI" id="CHEBI:18420"/>
    </ligand>
</feature>
<feature type="binding site" evidence="2">
    <location>
        <begin position="81"/>
        <end position="85"/>
    </location>
    <ligand>
        <name>GTP</name>
        <dbReference type="ChEBI" id="CHEBI:37565"/>
    </ligand>
</feature>
<feature type="binding site" evidence="2">
    <location>
        <begin position="136"/>
        <end position="139"/>
    </location>
    <ligand>
        <name>GTP</name>
        <dbReference type="ChEBI" id="CHEBI:37565"/>
    </ligand>
</feature>
<keyword id="KW-0002">3D-structure</keyword>
<keyword id="KW-0963">Cytoplasm</keyword>
<keyword id="KW-0251">Elongation factor</keyword>
<keyword id="KW-0342">GTP-binding</keyword>
<keyword id="KW-0378">Hydrolase</keyword>
<keyword id="KW-0460">Magnesium</keyword>
<keyword id="KW-0479">Metal-binding</keyword>
<keyword id="KW-0547">Nucleotide-binding</keyword>
<keyword id="KW-0648">Protein biosynthesis</keyword>
<organism>
    <name type="scientific">Escherichia coli (strain UTI89 / UPEC)</name>
    <dbReference type="NCBI Taxonomy" id="364106"/>
    <lineage>
        <taxon>Bacteria</taxon>
        <taxon>Pseudomonadati</taxon>
        <taxon>Pseudomonadota</taxon>
        <taxon>Gammaproteobacteria</taxon>
        <taxon>Enterobacterales</taxon>
        <taxon>Enterobacteriaceae</taxon>
        <taxon>Escherichia</taxon>
    </lineage>
</organism>
<name>EFTU1_ECOUT</name>
<dbReference type="EC" id="3.6.5.3" evidence="2"/>
<dbReference type="EMBL" id="CP000243">
    <property type="protein sequence ID" value="ABE09232.1"/>
    <property type="molecule type" value="Genomic_DNA"/>
</dbReference>
<dbReference type="PDB" id="2HCJ">
    <property type="method" value="X-ray"/>
    <property type="resolution" value="2.12 A"/>
    <property type="chains" value="B=60-394"/>
</dbReference>
<dbReference type="PDBsum" id="2HCJ"/>
<dbReference type="SMR" id="Q1R5Y2"/>
<dbReference type="KEGG" id="eci:UTI89_C3795"/>
<dbReference type="HOGENOM" id="CLU_007265_0_2_6"/>
<dbReference type="Proteomes" id="UP000001952">
    <property type="component" value="Chromosome"/>
</dbReference>
<dbReference type="GO" id="GO:0005829">
    <property type="term" value="C:cytosol"/>
    <property type="evidence" value="ECO:0007669"/>
    <property type="project" value="TreeGrafter"/>
</dbReference>
<dbReference type="GO" id="GO:0005525">
    <property type="term" value="F:GTP binding"/>
    <property type="evidence" value="ECO:0007669"/>
    <property type="project" value="UniProtKB-UniRule"/>
</dbReference>
<dbReference type="GO" id="GO:0003924">
    <property type="term" value="F:GTPase activity"/>
    <property type="evidence" value="ECO:0007669"/>
    <property type="project" value="InterPro"/>
</dbReference>
<dbReference type="GO" id="GO:0097216">
    <property type="term" value="F:guanosine tetraphosphate binding"/>
    <property type="evidence" value="ECO:0007669"/>
    <property type="project" value="UniProtKB-ARBA"/>
</dbReference>
<dbReference type="GO" id="GO:0003746">
    <property type="term" value="F:translation elongation factor activity"/>
    <property type="evidence" value="ECO:0007669"/>
    <property type="project" value="UniProtKB-UniRule"/>
</dbReference>
<dbReference type="CDD" id="cd01884">
    <property type="entry name" value="EF_Tu"/>
    <property type="match status" value="1"/>
</dbReference>
<dbReference type="CDD" id="cd03697">
    <property type="entry name" value="EFTU_II"/>
    <property type="match status" value="1"/>
</dbReference>
<dbReference type="CDD" id="cd03707">
    <property type="entry name" value="EFTU_III"/>
    <property type="match status" value="1"/>
</dbReference>
<dbReference type="FunFam" id="2.40.30.10:FF:000001">
    <property type="entry name" value="Elongation factor Tu"/>
    <property type="match status" value="1"/>
</dbReference>
<dbReference type="FunFam" id="3.40.50.300:FF:000003">
    <property type="entry name" value="Elongation factor Tu"/>
    <property type="match status" value="1"/>
</dbReference>
<dbReference type="Gene3D" id="3.40.50.300">
    <property type="entry name" value="P-loop containing nucleotide triphosphate hydrolases"/>
    <property type="match status" value="1"/>
</dbReference>
<dbReference type="Gene3D" id="2.40.30.10">
    <property type="entry name" value="Translation factors"/>
    <property type="match status" value="2"/>
</dbReference>
<dbReference type="HAMAP" id="MF_00118_B">
    <property type="entry name" value="EF_Tu_B"/>
    <property type="match status" value="1"/>
</dbReference>
<dbReference type="InterPro" id="IPR041709">
    <property type="entry name" value="EF-Tu_GTP-bd"/>
</dbReference>
<dbReference type="InterPro" id="IPR050055">
    <property type="entry name" value="EF-Tu_GTPase"/>
</dbReference>
<dbReference type="InterPro" id="IPR004161">
    <property type="entry name" value="EFTu-like_2"/>
</dbReference>
<dbReference type="InterPro" id="IPR033720">
    <property type="entry name" value="EFTU_2"/>
</dbReference>
<dbReference type="InterPro" id="IPR031157">
    <property type="entry name" value="G_TR_CS"/>
</dbReference>
<dbReference type="InterPro" id="IPR027417">
    <property type="entry name" value="P-loop_NTPase"/>
</dbReference>
<dbReference type="InterPro" id="IPR005225">
    <property type="entry name" value="Small_GTP-bd"/>
</dbReference>
<dbReference type="InterPro" id="IPR000795">
    <property type="entry name" value="T_Tr_GTP-bd_dom"/>
</dbReference>
<dbReference type="InterPro" id="IPR009000">
    <property type="entry name" value="Transl_B-barrel_sf"/>
</dbReference>
<dbReference type="InterPro" id="IPR009001">
    <property type="entry name" value="Transl_elong_EF1A/Init_IF2_C"/>
</dbReference>
<dbReference type="InterPro" id="IPR004541">
    <property type="entry name" value="Transl_elong_EFTu/EF1A_bac/org"/>
</dbReference>
<dbReference type="InterPro" id="IPR004160">
    <property type="entry name" value="Transl_elong_EFTu/EF1A_C"/>
</dbReference>
<dbReference type="NCBIfam" id="TIGR00485">
    <property type="entry name" value="EF-Tu"/>
    <property type="match status" value="1"/>
</dbReference>
<dbReference type="NCBIfam" id="NF000766">
    <property type="entry name" value="PRK00049.1"/>
    <property type="match status" value="1"/>
</dbReference>
<dbReference type="NCBIfam" id="NF009372">
    <property type="entry name" value="PRK12735.1"/>
    <property type="match status" value="1"/>
</dbReference>
<dbReference type="NCBIfam" id="NF009373">
    <property type="entry name" value="PRK12736.1"/>
    <property type="match status" value="1"/>
</dbReference>
<dbReference type="NCBIfam" id="TIGR00231">
    <property type="entry name" value="small_GTP"/>
    <property type="match status" value="1"/>
</dbReference>
<dbReference type="PANTHER" id="PTHR43721:SF22">
    <property type="entry name" value="ELONGATION FACTOR TU, MITOCHONDRIAL"/>
    <property type="match status" value="1"/>
</dbReference>
<dbReference type="PANTHER" id="PTHR43721">
    <property type="entry name" value="ELONGATION FACTOR TU-RELATED"/>
    <property type="match status" value="1"/>
</dbReference>
<dbReference type="Pfam" id="PF00009">
    <property type="entry name" value="GTP_EFTU"/>
    <property type="match status" value="1"/>
</dbReference>
<dbReference type="Pfam" id="PF03144">
    <property type="entry name" value="GTP_EFTU_D2"/>
    <property type="match status" value="1"/>
</dbReference>
<dbReference type="Pfam" id="PF03143">
    <property type="entry name" value="GTP_EFTU_D3"/>
    <property type="match status" value="1"/>
</dbReference>
<dbReference type="PRINTS" id="PR00315">
    <property type="entry name" value="ELONGATNFCT"/>
</dbReference>
<dbReference type="SUPFAM" id="SSF50465">
    <property type="entry name" value="EF-Tu/eEF-1alpha/eIF2-gamma C-terminal domain"/>
    <property type="match status" value="1"/>
</dbReference>
<dbReference type="SUPFAM" id="SSF52540">
    <property type="entry name" value="P-loop containing nucleoside triphosphate hydrolases"/>
    <property type="match status" value="1"/>
</dbReference>
<dbReference type="SUPFAM" id="SSF50447">
    <property type="entry name" value="Translation proteins"/>
    <property type="match status" value="1"/>
</dbReference>
<dbReference type="PROSITE" id="PS00301">
    <property type="entry name" value="G_TR_1"/>
    <property type="match status" value="1"/>
</dbReference>
<dbReference type="PROSITE" id="PS51722">
    <property type="entry name" value="G_TR_2"/>
    <property type="match status" value="1"/>
</dbReference>
<gene>
    <name evidence="2" type="primary">tuf1</name>
    <name type="synonym">tufB</name>
    <name type="ordered locus">UTI89_C3795</name>
</gene>